<gene>
    <name evidence="6" type="primary">B4galt2</name>
</gene>
<name>B4GT2_MOUSE</name>
<accession>Q9Z2Y2</accession>
<accession>Q3TMP2</accession>
<dbReference type="EC" id="2.4.1.-" evidence="2"/>
<dbReference type="EC" id="2.4.1.38" evidence="2"/>
<dbReference type="EC" id="2.4.1.22" evidence="2"/>
<dbReference type="EC" id="2.4.1.90" evidence="2"/>
<dbReference type="EMBL" id="AF142670">
    <property type="protein sequence ID" value="AAF22220.1"/>
    <property type="molecule type" value="mRNA"/>
</dbReference>
<dbReference type="EMBL" id="AB019541">
    <property type="protein sequence ID" value="BAA34385.1"/>
    <property type="molecule type" value="mRNA"/>
</dbReference>
<dbReference type="EMBL" id="AK165829">
    <property type="protein sequence ID" value="BAE38399.1"/>
    <property type="molecule type" value="mRNA"/>
</dbReference>
<dbReference type="CCDS" id="CCDS18539.1"/>
<dbReference type="RefSeq" id="NP_001240310.1">
    <property type="nucleotide sequence ID" value="NM_001253381.2"/>
</dbReference>
<dbReference type="RefSeq" id="NP_059073.1">
    <property type="nucleotide sequence ID" value="NM_017377.6"/>
</dbReference>
<dbReference type="RefSeq" id="XP_006503293.1">
    <property type="nucleotide sequence ID" value="XM_006503230.3"/>
</dbReference>
<dbReference type="RefSeq" id="XP_017175805.1">
    <property type="nucleotide sequence ID" value="XM_017320316.1"/>
</dbReference>
<dbReference type="SMR" id="Q9Z2Y2"/>
<dbReference type="FunCoup" id="Q9Z2Y2">
    <property type="interactions" value="2642"/>
</dbReference>
<dbReference type="STRING" id="10090.ENSMUSP00000030266"/>
<dbReference type="CAZy" id="GT7">
    <property type="family name" value="Glycosyltransferase Family 7"/>
</dbReference>
<dbReference type="GlyCosmos" id="Q9Z2Y2">
    <property type="glycosylation" value="3 sites, No reported glycans"/>
</dbReference>
<dbReference type="GlyGen" id="Q9Z2Y2">
    <property type="glycosylation" value="5 sites, 2 N-linked glycans (2 sites)"/>
</dbReference>
<dbReference type="PhosphoSitePlus" id="Q9Z2Y2"/>
<dbReference type="PaxDb" id="10090-ENSMUSP00000030266"/>
<dbReference type="ProteomicsDB" id="273460"/>
<dbReference type="Antibodypedia" id="32429">
    <property type="antibodies" value="182 antibodies from 26 providers"/>
</dbReference>
<dbReference type="DNASU" id="53418"/>
<dbReference type="Ensembl" id="ENSMUST00000030266.12">
    <property type="protein sequence ID" value="ENSMUSP00000030266.6"/>
    <property type="gene ID" value="ENSMUSG00000028541.15"/>
</dbReference>
<dbReference type="Ensembl" id="ENSMUST00000084325.10">
    <property type="protein sequence ID" value="ENSMUSP00000081352.4"/>
    <property type="gene ID" value="ENSMUSG00000028541.15"/>
</dbReference>
<dbReference type="Ensembl" id="ENSMUST00000106421.9">
    <property type="protein sequence ID" value="ENSMUSP00000102029.3"/>
    <property type="gene ID" value="ENSMUSG00000028541.15"/>
</dbReference>
<dbReference type="GeneID" id="53418"/>
<dbReference type="KEGG" id="mmu:53418"/>
<dbReference type="UCSC" id="uc008ujb.2">
    <property type="organism name" value="mouse"/>
</dbReference>
<dbReference type="AGR" id="MGI:1858493"/>
<dbReference type="CTD" id="8704"/>
<dbReference type="MGI" id="MGI:1858493">
    <property type="gene designation" value="B4galt2"/>
</dbReference>
<dbReference type="VEuPathDB" id="HostDB:ENSMUSG00000028541"/>
<dbReference type="eggNOG" id="KOG3916">
    <property type="taxonomic scope" value="Eukaryota"/>
</dbReference>
<dbReference type="GeneTree" id="ENSGT00940000159367"/>
<dbReference type="HOGENOM" id="CLU_044391_0_0_1"/>
<dbReference type="InParanoid" id="Q9Z2Y2"/>
<dbReference type="OMA" id="GEQPRHF"/>
<dbReference type="OrthoDB" id="10016069at2759"/>
<dbReference type="PhylomeDB" id="Q9Z2Y2"/>
<dbReference type="TreeFam" id="TF312834"/>
<dbReference type="Reactome" id="R-MMU-2022854">
    <property type="pathway name" value="Keratan sulfate biosynthesis"/>
</dbReference>
<dbReference type="Reactome" id="R-MMU-975577">
    <property type="pathway name" value="N-Glycan antennae elongation"/>
</dbReference>
<dbReference type="UniPathway" id="UPA00378"/>
<dbReference type="BioGRID-ORCS" id="53418">
    <property type="hits" value="2 hits in 81 CRISPR screens"/>
</dbReference>
<dbReference type="ChiTaRS" id="B4galt2">
    <property type="organism name" value="mouse"/>
</dbReference>
<dbReference type="PRO" id="PR:Q9Z2Y2"/>
<dbReference type="Proteomes" id="UP000000589">
    <property type="component" value="Chromosome 4"/>
</dbReference>
<dbReference type="RNAct" id="Q9Z2Y2">
    <property type="molecule type" value="protein"/>
</dbReference>
<dbReference type="Bgee" id="ENSMUSG00000028541">
    <property type="expression patterns" value="Expressed in embryonic brain and 215 other cell types or tissues"/>
</dbReference>
<dbReference type="ExpressionAtlas" id="Q9Z2Y2">
    <property type="expression patterns" value="baseline and differential"/>
</dbReference>
<dbReference type="GO" id="GO:0032580">
    <property type="term" value="C:Golgi cisterna membrane"/>
    <property type="evidence" value="ECO:0007669"/>
    <property type="project" value="UniProtKB-SubCell"/>
</dbReference>
<dbReference type="GO" id="GO:0005654">
    <property type="term" value="C:nucleoplasm"/>
    <property type="evidence" value="ECO:0007669"/>
    <property type="project" value="Ensembl"/>
</dbReference>
<dbReference type="GO" id="GO:0003831">
    <property type="term" value="F:beta-N-acetylglucosaminylglycopeptide beta-1,4-galactosyltransferase activity"/>
    <property type="evidence" value="ECO:0007669"/>
    <property type="project" value="UniProtKB-EC"/>
</dbReference>
<dbReference type="GO" id="GO:0004461">
    <property type="term" value="F:lactose synthase activity"/>
    <property type="evidence" value="ECO:0007669"/>
    <property type="project" value="UniProtKB-EC"/>
</dbReference>
<dbReference type="GO" id="GO:0046872">
    <property type="term" value="F:metal ion binding"/>
    <property type="evidence" value="ECO:0007669"/>
    <property type="project" value="UniProtKB-KW"/>
</dbReference>
<dbReference type="GO" id="GO:0003945">
    <property type="term" value="F:N-acetyllactosamine synthase activity"/>
    <property type="evidence" value="ECO:0007669"/>
    <property type="project" value="UniProtKB-EC"/>
</dbReference>
<dbReference type="GO" id="GO:0007420">
    <property type="term" value="P:brain development"/>
    <property type="evidence" value="ECO:0000315"/>
    <property type="project" value="MGI"/>
</dbReference>
<dbReference type="GO" id="GO:0005975">
    <property type="term" value="P:carbohydrate metabolic process"/>
    <property type="evidence" value="ECO:0007669"/>
    <property type="project" value="InterPro"/>
</dbReference>
<dbReference type="GO" id="GO:0021680">
    <property type="term" value="P:cerebellar Purkinje cell layer development"/>
    <property type="evidence" value="ECO:0000315"/>
    <property type="project" value="MGI"/>
</dbReference>
<dbReference type="GO" id="GO:0007626">
    <property type="term" value="P:locomotory behavior"/>
    <property type="evidence" value="ECO:0000315"/>
    <property type="project" value="MGI"/>
</dbReference>
<dbReference type="GO" id="GO:0007613">
    <property type="term" value="P:memory"/>
    <property type="evidence" value="ECO:0000315"/>
    <property type="project" value="MGI"/>
</dbReference>
<dbReference type="GO" id="GO:0006486">
    <property type="term" value="P:protein glycosylation"/>
    <property type="evidence" value="ECO:0007669"/>
    <property type="project" value="UniProtKB-UniPathway"/>
</dbReference>
<dbReference type="GO" id="GO:0008542">
    <property type="term" value="P:visual learning"/>
    <property type="evidence" value="ECO:0000315"/>
    <property type="project" value="MGI"/>
</dbReference>
<dbReference type="CDD" id="cd00899">
    <property type="entry name" value="b4GalT"/>
    <property type="match status" value="1"/>
</dbReference>
<dbReference type="FunFam" id="3.90.550.10:FF:000028">
    <property type="entry name" value="beta-1,4-galactosyltransferase 1"/>
    <property type="match status" value="1"/>
</dbReference>
<dbReference type="Gene3D" id="3.90.550.10">
    <property type="entry name" value="Spore Coat Polysaccharide Biosynthesis Protein SpsA, Chain A"/>
    <property type="match status" value="1"/>
</dbReference>
<dbReference type="InterPro" id="IPR003859">
    <property type="entry name" value="Galactosyl_T"/>
</dbReference>
<dbReference type="InterPro" id="IPR027791">
    <property type="entry name" value="Galactosyl_T_C"/>
</dbReference>
<dbReference type="InterPro" id="IPR027995">
    <property type="entry name" value="Galactosyl_T_N"/>
</dbReference>
<dbReference type="InterPro" id="IPR029044">
    <property type="entry name" value="Nucleotide-diphossugar_trans"/>
</dbReference>
<dbReference type="PANTHER" id="PTHR19300">
    <property type="entry name" value="BETA-1,4-GALACTOSYLTRANSFERASE"/>
    <property type="match status" value="1"/>
</dbReference>
<dbReference type="PANTHER" id="PTHR19300:SF32">
    <property type="entry name" value="BETA-1,4-GALACTOSYLTRANSFERASE 2"/>
    <property type="match status" value="1"/>
</dbReference>
<dbReference type="Pfam" id="PF02709">
    <property type="entry name" value="Glyco_transf_7C"/>
    <property type="match status" value="1"/>
</dbReference>
<dbReference type="Pfam" id="PF13733">
    <property type="entry name" value="Glyco_transf_7N"/>
    <property type="match status" value="1"/>
</dbReference>
<dbReference type="PRINTS" id="PR02050">
    <property type="entry name" value="B14GALTRFASE"/>
</dbReference>
<dbReference type="SUPFAM" id="SSF53448">
    <property type="entry name" value="Nucleotide-diphospho-sugar transferases"/>
    <property type="match status" value="1"/>
</dbReference>
<organism>
    <name type="scientific">Mus musculus</name>
    <name type="common">Mouse</name>
    <dbReference type="NCBI Taxonomy" id="10090"/>
    <lineage>
        <taxon>Eukaryota</taxon>
        <taxon>Metazoa</taxon>
        <taxon>Chordata</taxon>
        <taxon>Craniata</taxon>
        <taxon>Vertebrata</taxon>
        <taxon>Euteleostomi</taxon>
        <taxon>Mammalia</taxon>
        <taxon>Eutheria</taxon>
        <taxon>Euarchontoglires</taxon>
        <taxon>Glires</taxon>
        <taxon>Rodentia</taxon>
        <taxon>Myomorpha</taxon>
        <taxon>Muroidea</taxon>
        <taxon>Muridae</taxon>
        <taxon>Murinae</taxon>
        <taxon>Mus</taxon>
        <taxon>Mus</taxon>
    </lineage>
</organism>
<keyword id="KW-1015">Disulfide bond</keyword>
<keyword id="KW-0325">Glycoprotein</keyword>
<keyword id="KW-0328">Glycosyltransferase</keyword>
<keyword id="KW-0333">Golgi apparatus</keyword>
<keyword id="KW-0464">Manganese</keyword>
<keyword id="KW-0472">Membrane</keyword>
<keyword id="KW-0479">Metal-binding</keyword>
<keyword id="KW-1185">Reference proteome</keyword>
<keyword id="KW-0735">Signal-anchor</keyword>
<keyword id="KW-0808">Transferase</keyword>
<keyword id="KW-0812">Transmembrane</keyword>
<keyword id="KW-1133">Transmembrane helix</keyword>
<sequence length="369" mass="41909">MSRLLGGTLERVCKAVLLLCLLHFLVAVILYFDVYAQHLAFFSRFSTRSPAHALYPAASSSTNCSRPNATAASSGLPEVPSARPGPTAPVIPPCPDVPPGLVGRVVIEFTSPMPLERVQRENPGVLLGGRYSPPDCTPAQTVAVIIPFRHREHHLRYWLHYLHPMLRRQRLRYGVYVINQHGEETFNRAKLLNVGFLEALKEDAAYDCFIFSDVDLVPMDDRNLYRCGDQPRHFAIAMDKFGFRLPYASYFGGVSGLSKAQFLRINGFPNEYWGWGGEDDDIFNRISLTGMKISRPDVRIGRYRMIKHDRDKHNEPNPQRFNKIQNTKMSMKWDGIGSVRYRVLEVSRQPLFTNITVDIGQPMSWLTQG</sequence>
<reference key="1">
    <citation type="journal article" date="1998" name="Glycobiology">
        <title>The expanding beta 4-galactosyltransferase gene family: messages from the databanks.</title>
        <authorList>
            <person name="Lo N.-W."/>
            <person name="Shaper J.H."/>
            <person name="Pevsner J."/>
            <person name="Shaper N.L."/>
        </authorList>
    </citation>
    <scope>NUCLEOTIDE SEQUENCE [MRNA]</scope>
</reference>
<reference key="2">
    <citation type="submission" date="1998-11" db="EMBL/GenBank/DDBJ databases">
        <title>Mouse beta-1,4-galactosyltransferase II (beta-1,4-GalT II).</title>
        <authorList>
            <person name="Sato T."/>
        </authorList>
    </citation>
    <scope>NUCLEOTIDE SEQUENCE [MRNA]</scope>
    <source>
        <tissue>Brain</tissue>
    </source>
</reference>
<reference key="3">
    <citation type="journal article" date="2005" name="Science">
        <title>The transcriptional landscape of the mammalian genome.</title>
        <authorList>
            <person name="Carninci P."/>
            <person name="Kasukawa T."/>
            <person name="Katayama S."/>
            <person name="Gough J."/>
            <person name="Frith M.C."/>
            <person name="Maeda N."/>
            <person name="Oyama R."/>
            <person name="Ravasi T."/>
            <person name="Lenhard B."/>
            <person name="Wells C."/>
            <person name="Kodzius R."/>
            <person name="Shimokawa K."/>
            <person name="Bajic V.B."/>
            <person name="Brenner S.E."/>
            <person name="Batalov S."/>
            <person name="Forrest A.R."/>
            <person name="Zavolan M."/>
            <person name="Davis M.J."/>
            <person name="Wilming L.G."/>
            <person name="Aidinis V."/>
            <person name="Allen J.E."/>
            <person name="Ambesi-Impiombato A."/>
            <person name="Apweiler R."/>
            <person name="Aturaliya R.N."/>
            <person name="Bailey T.L."/>
            <person name="Bansal M."/>
            <person name="Baxter L."/>
            <person name="Beisel K.W."/>
            <person name="Bersano T."/>
            <person name="Bono H."/>
            <person name="Chalk A.M."/>
            <person name="Chiu K.P."/>
            <person name="Choudhary V."/>
            <person name="Christoffels A."/>
            <person name="Clutterbuck D.R."/>
            <person name="Crowe M.L."/>
            <person name="Dalla E."/>
            <person name="Dalrymple B.P."/>
            <person name="de Bono B."/>
            <person name="Della Gatta G."/>
            <person name="di Bernardo D."/>
            <person name="Down T."/>
            <person name="Engstrom P."/>
            <person name="Fagiolini M."/>
            <person name="Faulkner G."/>
            <person name="Fletcher C.F."/>
            <person name="Fukushima T."/>
            <person name="Furuno M."/>
            <person name="Futaki S."/>
            <person name="Gariboldi M."/>
            <person name="Georgii-Hemming P."/>
            <person name="Gingeras T.R."/>
            <person name="Gojobori T."/>
            <person name="Green R.E."/>
            <person name="Gustincich S."/>
            <person name="Harbers M."/>
            <person name="Hayashi Y."/>
            <person name="Hensch T.K."/>
            <person name="Hirokawa N."/>
            <person name="Hill D."/>
            <person name="Huminiecki L."/>
            <person name="Iacono M."/>
            <person name="Ikeo K."/>
            <person name="Iwama A."/>
            <person name="Ishikawa T."/>
            <person name="Jakt M."/>
            <person name="Kanapin A."/>
            <person name="Katoh M."/>
            <person name="Kawasawa Y."/>
            <person name="Kelso J."/>
            <person name="Kitamura H."/>
            <person name="Kitano H."/>
            <person name="Kollias G."/>
            <person name="Krishnan S.P."/>
            <person name="Kruger A."/>
            <person name="Kummerfeld S.K."/>
            <person name="Kurochkin I.V."/>
            <person name="Lareau L.F."/>
            <person name="Lazarevic D."/>
            <person name="Lipovich L."/>
            <person name="Liu J."/>
            <person name="Liuni S."/>
            <person name="McWilliam S."/>
            <person name="Madan Babu M."/>
            <person name="Madera M."/>
            <person name="Marchionni L."/>
            <person name="Matsuda H."/>
            <person name="Matsuzawa S."/>
            <person name="Miki H."/>
            <person name="Mignone F."/>
            <person name="Miyake S."/>
            <person name="Morris K."/>
            <person name="Mottagui-Tabar S."/>
            <person name="Mulder N."/>
            <person name="Nakano N."/>
            <person name="Nakauchi H."/>
            <person name="Ng P."/>
            <person name="Nilsson R."/>
            <person name="Nishiguchi S."/>
            <person name="Nishikawa S."/>
            <person name="Nori F."/>
            <person name="Ohara O."/>
            <person name="Okazaki Y."/>
            <person name="Orlando V."/>
            <person name="Pang K.C."/>
            <person name="Pavan W.J."/>
            <person name="Pavesi G."/>
            <person name="Pesole G."/>
            <person name="Petrovsky N."/>
            <person name="Piazza S."/>
            <person name="Reed J."/>
            <person name="Reid J.F."/>
            <person name="Ring B.Z."/>
            <person name="Ringwald M."/>
            <person name="Rost B."/>
            <person name="Ruan Y."/>
            <person name="Salzberg S.L."/>
            <person name="Sandelin A."/>
            <person name="Schneider C."/>
            <person name="Schoenbach C."/>
            <person name="Sekiguchi K."/>
            <person name="Semple C.A."/>
            <person name="Seno S."/>
            <person name="Sessa L."/>
            <person name="Sheng Y."/>
            <person name="Shibata Y."/>
            <person name="Shimada H."/>
            <person name="Shimada K."/>
            <person name="Silva D."/>
            <person name="Sinclair B."/>
            <person name="Sperling S."/>
            <person name="Stupka E."/>
            <person name="Sugiura K."/>
            <person name="Sultana R."/>
            <person name="Takenaka Y."/>
            <person name="Taki K."/>
            <person name="Tammoja K."/>
            <person name="Tan S.L."/>
            <person name="Tang S."/>
            <person name="Taylor M.S."/>
            <person name="Tegner J."/>
            <person name="Teichmann S.A."/>
            <person name="Ueda H.R."/>
            <person name="van Nimwegen E."/>
            <person name="Verardo R."/>
            <person name="Wei C.L."/>
            <person name="Yagi K."/>
            <person name="Yamanishi H."/>
            <person name="Zabarovsky E."/>
            <person name="Zhu S."/>
            <person name="Zimmer A."/>
            <person name="Hide W."/>
            <person name="Bult C."/>
            <person name="Grimmond S.M."/>
            <person name="Teasdale R.D."/>
            <person name="Liu E.T."/>
            <person name="Brusic V."/>
            <person name="Quackenbush J."/>
            <person name="Wahlestedt C."/>
            <person name="Mattick J.S."/>
            <person name="Hume D.A."/>
            <person name="Kai C."/>
            <person name="Sasaki D."/>
            <person name="Tomaru Y."/>
            <person name="Fukuda S."/>
            <person name="Kanamori-Katayama M."/>
            <person name="Suzuki M."/>
            <person name="Aoki J."/>
            <person name="Arakawa T."/>
            <person name="Iida J."/>
            <person name="Imamura K."/>
            <person name="Itoh M."/>
            <person name="Kato T."/>
            <person name="Kawaji H."/>
            <person name="Kawagashira N."/>
            <person name="Kawashima T."/>
            <person name="Kojima M."/>
            <person name="Kondo S."/>
            <person name="Konno H."/>
            <person name="Nakano K."/>
            <person name="Ninomiya N."/>
            <person name="Nishio T."/>
            <person name="Okada M."/>
            <person name="Plessy C."/>
            <person name="Shibata K."/>
            <person name="Shiraki T."/>
            <person name="Suzuki S."/>
            <person name="Tagami M."/>
            <person name="Waki K."/>
            <person name="Watahiki A."/>
            <person name="Okamura-Oho Y."/>
            <person name="Suzuki H."/>
            <person name="Kawai J."/>
            <person name="Hayashizaki Y."/>
        </authorList>
    </citation>
    <scope>NUCLEOTIDE SEQUENCE [LARGE SCALE MRNA]</scope>
    <source>
        <tissue>Lung</tissue>
    </source>
</reference>
<comment type="function">
    <text evidence="2">Responsible for the synthesis of complex-type N-linked oligosaccharides in many glycoproteins as well as the carbohydrate moieties of glycolipids. Can produce lactose (By similarity).</text>
</comment>
<comment type="catalytic activity">
    <reaction evidence="2">
        <text>D-glucose + UDP-alpha-D-galactose = lactose + UDP + H(+)</text>
        <dbReference type="Rhea" id="RHEA:12404"/>
        <dbReference type="ChEBI" id="CHEBI:4167"/>
        <dbReference type="ChEBI" id="CHEBI:15378"/>
        <dbReference type="ChEBI" id="CHEBI:17716"/>
        <dbReference type="ChEBI" id="CHEBI:58223"/>
        <dbReference type="ChEBI" id="CHEBI:66914"/>
        <dbReference type="EC" id="2.4.1.22"/>
    </reaction>
    <physiologicalReaction direction="left-to-right" evidence="2">
        <dbReference type="Rhea" id="RHEA:12405"/>
    </physiologicalReaction>
</comment>
<comment type="catalytic activity">
    <reaction evidence="2">
        <text>an N-acetyl-beta-D-glucosaminyl derivative + UDP-alpha-D-galactose = a beta-D-galactosyl-(1-&gt;4)-N-acetyl-beta-D-glucosaminyl derivative + UDP + H(+)</text>
        <dbReference type="Rhea" id="RHEA:22932"/>
        <dbReference type="ChEBI" id="CHEBI:15378"/>
        <dbReference type="ChEBI" id="CHEBI:58223"/>
        <dbReference type="ChEBI" id="CHEBI:61631"/>
        <dbReference type="ChEBI" id="CHEBI:66914"/>
        <dbReference type="ChEBI" id="CHEBI:133507"/>
        <dbReference type="EC" id="2.4.1.38"/>
    </reaction>
    <physiologicalReaction direction="left-to-right" evidence="2">
        <dbReference type="Rhea" id="RHEA:22933"/>
    </physiologicalReaction>
</comment>
<comment type="catalytic activity">
    <reaction evidence="2">
        <text>N-acetyl-D-glucosamine + UDP-alpha-D-galactose = beta-D-galactosyl-(1-&gt;4)-N-acetyl-D-glucosamine + UDP + H(+)</text>
        <dbReference type="Rhea" id="RHEA:17745"/>
        <dbReference type="ChEBI" id="CHEBI:15378"/>
        <dbReference type="ChEBI" id="CHEBI:58223"/>
        <dbReference type="ChEBI" id="CHEBI:60152"/>
        <dbReference type="ChEBI" id="CHEBI:66914"/>
        <dbReference type="ChEBI" id="CHEBI:506227"/>
        <dbReference type="EC" id="2.4.1.90"/>
    </reaction>
    <physiologicalReaction direction="left-to-right" evidence="2">
        <dbReference type="Rhea" id="RHEA:17746"/>
    </physiologicalReaction>
</comment>
<comment type="cofactor">
    <cofactor evidence="1">
        <name>Mn(2+)</name>
        <dbReference type="ChEBI" id="CHEBI:29035"/>
    </cofactor>
</comment>
<comment type="pathway">
    <text>Protein modification; protein glycosylation.</text>
</comment>
<comment type="subcellular location">
    <subcellularLocation>
        <location evidence="1">Golgi apparatus</location>
        <location evidence="1">Golgi stack membrane</location>
        <topology evidence="1">Single-pass type II membrane protein</topology>
    </subcellularLocation>
    <text evidence="1">Trans cisternae of Golgi stack.</text>
</comment>
<comment type="similarity">
    <text evidence="5">Belongs to the glycosyltransferase 7 family.</text>
</comment>
<comment type="online information" name="Functional Glycomics Gateway - GTase">
    <link uri="http://www.functionalglycomics.org/glycomics/molecule/jsp/glycoEnzyme/viewGlycoEnzyme.jsp?gbpId=gt_mou_461"/>
    <text>b4GalT2</text>
</comment>
<proteinExistence type="evidence at transcript level"/>
<evidence type="ECO:0000250" key="1"/>
<evidence type="ECO:0000250" key="2">
    <source>
        <dbReference type="UniProtKB" id="O60909"/>
    </source>
</evidence>
<evidence type="ECO:0000255" key="3"/>
<evidence type="ECO:0000256" key="4">
    <source>
        <dbReference type="SAM" id="MobiDB-lite"/>
    </source>
</evidence>
<evidence type="ECO:0000305" key="5"/>
<evidence type="ECO:0000312" key="6">
    <source>
        <dbReference type="MGI" id="MGI:1858493"/>
    </source>
</evidence>
<protein>
    <recommendedName>
        <fullName evidence="5">Beta-1,4-galactosyltransferase 2</fullName>
        <shortName>Beta-1,4-GalTase 2</shortName>
        <shortName>Beta4Gal-T2</shortName>
        <shortName>b4Gal-T2</shortName>
        <ecNumber evidence="2">2.4.1.-</ecNumber>
    </recommendedName>
    <alternativeName>
        <fullName>Beta-N-acetylglucosaminyl-glycolipid beta-1,4-galactosyltransferase</fullName>
    </alternativeName>
    <alternativeName>
        <fullName>Beta-N-acetylglucosaminylglycopeptide beta-1,4-galactosyltransferase</fullName>
        <ecNumber evidence="2">2.4.1.38</ecNumber>
    </alternativeName>
    <alternativeName>
        <fullName>Lactose synthase A protein</fullName>
        <ecNumber evidence="2">2.4.1.22</ecNumber>
    </alternativeName>
    <alternativeName>
        <fullName>N-acetyllactosamine synthase</fullName>
        <ecNumber evidence="2">2.4.1.90</ecNumber>
    </alternativeName>
    <alternativeName>
        <fullName>Nal synthase</fullName>
    </alternativeName>
    <alternativeName>
        <fullName>UDP-Gal:beta-GlcNAc beta-1,4-galactosyltransferase 2</fullName>
    </alternativeName>
    <alternativeName>
        <fullName>UDP-galactose:beta-N-acetylglucosamine beta-1,4-galactosyltransferase 2</fullName>
    </alternativeName>
</protein>
<feature type="chain" id="PRO_0000080534" description="Beta-1,4-galactosyltransferase 2">
    <location>
        <begin position="1"/>
        <end position="369"/>
    </location>
</feature>
<feature type="topological domain" description="Cytoplasmic" evidence="3">
    <location>
        <begin position="1"/>
        <end position="15"/>
    </location>
</feature>
<feature type="transmembrane region" description="Helical; Signal-anchor for type II membrane protein" evidence="3">
    <location>
        <begin position="16"/>
        <end position="36"/>
    </location>
</feature>
<feature type="topological domain" description="Lumenal" evidence="3">
    <location>
        <begin position="37"/>
        <end position="369"/>
    </location>
</feature>
<feature type="region of interest" description="Disordered" evidence="4">
    <location>
        <begin position="58"/>
        <end position="90"/>
    </location>
</feature>
<feature type="compositionally biased region" description="Polar residues" evidence="4">
    <location>
        <begin position="58"/>
        <end position="73"/>
    </location>
</feature>
<feature type="binding site" evidence="1">
    <location>
        <begin position="147"/>
        <end position="151"/>
    </location>
    <ligand>
        <name>UDP-alpha-D-galactose</name>
        <dbReference type="ChEBI" id="CHEBI:66914"/>
    </ligand>
</feature>
<feature type="binding site" evidence="1">
    <location>
        <begin position="186"/>
        <end position="188"/>
    </location>
    <ligand>
        <name>UDP-alpha-D-galactose</name>
        <dbReference type="ChEBI" id="CHEBI:66914"/>
    </ligand>
</feature>
<feature type="binding site" evidence="1">
    <location>
        <begin position="214"/>
        <end position="215"/>
    </location>
    <ligand>
        <name>UDP-alpha-D-galactose</name>
        <dbReference type="ChEBI" id="CHEBI:66914"/>
    </ligand>
</feature>
<feature type="binding site" evidence="1">
    <location>
        <position position="215"/>
    </location>
    <ligand>
        <name>Mn(2+)</name>
        <dbReference type="ChEBI" id="CHEBI:29035"/>
    </ligand>
</feature>
<feature type="binding site" evidence="1">
    <location>
        <position position="275"/>
    </location>
    <ligand>
        <name>UDP-alpha-D-galactose</name>
        <dbReference type="ChEBI" id="CHEBI:66914"/>
    </ligand>
</feature>
<feature type="binding site" evidence="1">
    <location>
        <begin position="277"/>
        <end position="280"/>
    </location>
    <ligand>
        <name>N-acetyl-D-glucosamine</name>
        <dbReference type="ChEBI" id="CHEBI:506227"/>
    </ligand>
</feature>
<feature type="binding site" evidence="1">
    <location>
        <begin position="308"/>
        <end position="310"/>
    </location>
    <ligand>
        <name>UDP-alpha-D-galactose</name>
        <dbReference type="ChEBI" id="CHEBI:66914"/>
    </ligand>
</feature>
<feature type="binding site" evidence="1">
    <location>
        <position position="308"/>
    </location>
    <ligand>
        <name>Mn(2+)</name>
        <dbReference type="ChEBI" id="CHEBI:29035"/>
    </ligand>
</feature>
<feature type="binding site" evidence="1">
    <location>
        <position position="320"/>
    </location>
    <ligand>
        <name>N-acetyl-D-glucosamine</name>
        <dbReference type="ChEBI" id="CHEBI:506227"/>
    </ligand>
</feature>
<feature type="glycosylation site" description="N-linked (GlcNAc...) asparagine" evidence="3">
    <location>
        <position position="63"/>
    </location>
</feature>
<feature type="glycosylation site" description="N-linked (GlcNAc...) asparagine" evidence="3">
    <location>
        <position position="68"/>
    </location>
</feature>
<feature type="glycosylation site" description="N-linked (GlcNAc...) asparagine" evidence="3">
    <location>
        <position position="354"/>
    </location>
</feature>
<feature type="disulfide bond" evidence="1">
    <location>
        <begin position="94"/>
        <end position="136"/>
    </location>
</feature>
<feature type="disulfide bond" evidence="1">
    <location>
        <begin position="208"/>
        <end position="227"/>
    </location>
</feature>